<protein>
    <recommendedName>
        <fullName evidence="1">tRNA N6-adenosine threonylcarbamoyltransferase</fullName>
        <ecNumber evidence="1">2.3.1.234</ecNumber>
    </recommendedName>
    <alternativeName>
        <fullName evidence="1">N6-L-threonylcarbamoyladenine synthase</fullName>
        <shortName evidence="1">t(6)A synthase</shortName>
    </alternativeName>
    <alternativeName>
        <fullName evidence="1">t(6)A37 threonylcarbamoyladenosine biosynthesis protein TsaD</fullName>
    </alternativeName>
    <alternativeName>
        <fullName evidence="1">tRNA threonylcarbamoyladenosine biosynthesis protein TsaD</fullName>
    </alternativeName>
</protein>
<gene>
    <name evidence="1" type="primary">tsaD</name>
    <name type="synonym">gcp</name>
    <name type="ordered locus">ECED1_3733</name>
</gene>
<reference key="1">
    <citation type="journal article" date="2009" name="PLoS Genet.">
        <title>Organised genome dynamics in the Escherichia coli species results in highly diverse adaptive paths.</title>
        <authorList>
            <person name="Touchon M."/>
            <person name="Hoede C."/>
            <person name="Tenaillon O."/>
            <person name="Barbe V."/>
            <person name="Baeriswyl S."/>
            <person name="Bidet P."/>
            <person name="Bingen E."/>
            <person name="Bonacorsi S."/>
            <person name="Bouchier C."/>
            <person name="Bouvet O."/>
            <person name="Calteau A."/>
            <person name="Chiapello H."/>
            <person name="Clermont O."/>
            <person name="Cruveiller S."/>
            <person name="Danchin A."/>
            <person name="Diard M."/>
            <person name="Dossat C."/>
            <person name="Karoui M.E."/>
            <person name="Frapy E."/>
            <person name="Garry L."/>
            <person name="Ghigo J.M."/>
            <person name="Gilles A.M."/>
            <person name="Johnson J."/>
            <person name="Le Bouguenec C."/>
            <person name="Lescat M."/>
            <person name="Mangenot S."/>
            <person name="Martinez-Jehanne V."/>
            <person name="Matic I."/>
            <person name="Nassif X."/>
            <person name="Oztas S."/>
            <person name="Petit M.A."/>
            <person name="Pichon C."/>
            <person name="Rouy Z."/>
            <person name="Ruf C.S."/>
            <person name="Schneider D."/>
            <person name="Tourret J."/>
            <person name="Vacherie B."/>
            <person name="Vallenet D."/>
            <person name="Medigue C."/>
            <person name="Rocha E.P.C."/>
            <person name="Denamur E."/>
        </authorList>
    </citation>
    <scope>NUCLEOTIDE SEQUENCE [LARGE SCALE GENOMIC DNA]</scope>
    <source>
        <strain>ED1a</strain>
    </source>
</reference>
<accession>B7N068</accession>
<proteinExistence type="inferred from homology"/>
<sequence>MRVLGIETSCDETGIAIYDDEKGLLANQLYSQVKLHADYGGVVPELASRDHVRKTVPLIQEALKESGLTAKDIDAVAYTAGPGLVGALLVGATVGRSLAFAWDVPAIPVHHMEGHLLAPMLEDNPPEFPFVALLVSGGHTQLISVTGIGQYELLGESIDDAAGEAFDKTAKLLGLDYPGGPLLSKMAAQGTAGRFVFPRPMTDRPGLDFSFSGLKTFAANTIRDNGTDDQTRADIARAFEDAVVDTLMIKCKRALDQTGFKRLVMAGGVSANRTLRAKLAEMMKKRRGEVFYARPEFCTDNGAMIAYAGMVRFKAGATADLGVSVRPRWPLAELPAA</sequence>
<dbReference type="EC" id="2.3.1.234" evidence="1"/>
<dbReference type="EMBL" id="CU928162">
    <property type="protein sequence ID" value="CAR09736.1"/>
    <property type="molecule type" value="Genomic_DNA"/>
</dbReference>
<dbReference type="RefSeq" id="WP_001264377.1">
    <property type="nucleotide sequence ID" value="NC_011745.1"/>
</dbReference>
<dbReference type="SMR" id="B7N068"/>
<dbReference type="KEGG" id="ecq:ECED1_3733"/>
<dbReference type="HOGENOM" id="CLU_023208_0_2_6"/>
<dbReference type="Proteomes" id="UP000000748">
    <property type="component" value="Chromosome"/>
</dbReference>
<dbReference type="GO" id="GO:0005737">
    <property type="term" value="C:cytoplasm"/>
    <property type="evidence" value="ECO:0007669"/>
    <property type="project" value="UniProtKB-SubCell"/>
</dbReference>
<dbReference type="GO" id="GO:0005506">
    <property type="term" value="F:iron ion binding"/>
    <property type="evidence" value="ECO:0007669"/>
    <property type="project" value="UniProtKB-UniRule"/>
</dbReference>
<dbReference type="GO" id="GO:0061711">
    <property type="term" value="F:N(6)-L-threonylcarbamoyladenine synthase activity"/>
    <property type="evidence" value="ECO:0007669"/>
    <property type="project" value="UniProtKB-EC"/>
</dbReference>
<dbReference type="GO" id="GO:0002949">
    <property type="term" value="P:tRNA threonylcarbamoyladenosine modification"/>
    <property type="evidence" value="ECO:0007669"/>
    <property type="project" value="UniProtKB-UniRule"/>
</dbReference>
<dbReference type="CDD" id="cd24097">
    <property type="entry name" value="ASKHA_NBD_TsaD-like"/>
    <property type="match status" value="1"/>
</dbReference>
<dbReference type="FunFam" id="3.30.420.40:FF:000031">
    <property type="entry name" value="tRNA N6-adenosine threonylcarbamoyltransferase"/>
    <property type="match status" value="1"/>
</dbReference>
<dbReference type="Gene3D" id="3.30.420.40">
    <property type="match status" value="2"/>
</dbReference>
<dbReference type="HAMAP" id="MF_01445">
    <property type="entry name" value="TsaD"/>
    <property type="match status" value="1"/>
</dbReference>
<dbReference type="InterPro" id="IPR043129">
    <property type="entry name" value="ATPase_NBD"/>
</dbReference>
<dbReference type="InterPro" id="IPR000905">
    <property type="entry name" value="Gcp-like_dom"/>
</dbReference>
<dbReference type="InterPro" id="IPR017861">
    <property type="entry name" value="KAE1/TsaD"/>
</dbReference>
<dbReference type="InterPro" id="IPR017860">
    <property type="entry name" value="Peptidase_M22_CS"/>
</dbReference>
<dbReference type="InterPro" id="IPR022450">
    <property type="entry name" value="TsaD"/>
</dbReference>
<dbReference type="NCBIfam" id="TIGR00329">
    <property type="entry name" value="gcp_kae1"/>
    <property type="match status" value="1"/>
</dbReference>
<dbReference type="NCBIfam" id="TIGR03723">
    <property type="entry name" value="T6A_TsaD_YgjD"/>
    <property type="match status" value="1"/>
</dbReference>
<dbReference type="PANTHER" id="PTHR11735">
    <property type="entry name" value="TRNA N6-ADENOSINE THREONYLCARBAMOYLTRANSFERASE"/>
    <property type="match status" value="1"/>
</dbReference>
<dbReference type="PANTHER" id="PTHR11735:SF6">
    <property type="entry name" value="TRNA N6-ADENOSINE THREONYLCARBAMOYLTRANSFERASE, MITOCHONDRIAL"/>
    <property type="match status" value="1"/>
</dbReference>
<dbReference type="Pfam" id="PF00814">
    <property type="entry name" value="TsaD"/>
    <property type="match status" value="1"/>
</dbReference>
<dbReference type="PRINTS" id="PR00789">
    <property type="entry name" value="OSIALOPTASE"/>
</dbReference>
<dbReference type="SUPFAM" id="SSF53067">
    <property type="entry name" value="Actin-like ATPase domain"/>
    <property type="match status" value="1"/>
</dbReference>
<dbReference type="PROSITE" id="PS01016">
    <property type="entry name" value="GLYCOPROTEASE"/>
    <property type="match status" value="1"/>
</dbReference>
<comment type="function">
    <text evidence="1">Required for the formation of a threonylcarbamoyl group on adenosine at position 37 (t(6)A37) in tRNAs that read codons beginning with adenine. Is involved in the transfer of the threonylcarbamoyl moiety of threonylcarbamoyl-AMP (TC-AMP) to the N6 group of A37, together with TsaE and TsaB. TsaD likely plays a direct catalytic role in this reaction.</text>
</comment>
<comment type="catalytic activity">
    <reaction evidence="1">
        <text>L-threonylcarbamoyladenylate + adenosine(37) in tRNA = N(6)-L-threonylcarbamoyladenosine(37) in tRNA + AMP + H(+)</text>
        <dbReference type="Rhea" id="RHEA:37059"/>
        <dbReference type="Rhea" id="RHEA-COMP:10162"/>
        <dbReference type="Rhea" id="RHEA-COMP:10163"/>
        <dbReference type="ChEBI" id="CHEBI:15378"/>
        <dbReference type="ChEBI" id="CHEBI:73682"/>
        <dbReference type="ChEBI" id="CHEBI:74411"/>
        <dbReference type="ChEBI" id="CHEBI:74418"/>
        <dbReference type="ChEBI" id="CHEBI:456215"/>
        <dbReference type="EC" id="2.3.1.234"/>
    </reaction>
</comment>
<comment type="cofactor">
    <cofactor evidence="1">
        <name>Fe(2+)</name>
        <dbReference type="ChEBI" id="CHEBI:29033"/>
    </cofactor>
    <text evidence="1">Binds 1 Fe(2+) ion per subunit.</text>
</comment>
<comment type="subcellular location">
    <subcellularLocation>
        <location evidence="1">Cytoplasm</location>
    </subcellularLocation>
</comment>
<comment type="similarity">
    <text evidence="1">Belongs to the KAE1 / TsaD family.</text>
</comment>
<organism>
    <name type="scientific">Escherichia coli O81 (strain ED1a)</name>
    <dbReference type="NCBI Taxonomy" id="585397"/>
    <lineage>
        <taxon>Bacteria</taxon>
        <taxon>Pseudomonadati</taxon>
        <taxon>Pseudomonadota</taxon>
        <taxon>Gammaproteobacteria</taxon>
        <taxon>Enterobacterales</taxon>
        <taxon>Enterobacteriaceae</taxon>
        <taxon>Escherichia</taxon>
    </lineage>
</organism>
<feature type="chain" id="PRO_1000184965" description="tRNA N6-adenosine threonylcarbamoyltransferase">
    <location>
        <begin position="1"/>
        <end position="337"/>
    </location>
</feature>
<feature type="binding site" evidence="1">
    <location>
        <position position="111"/>
    </location>
    <ligand>
        <name>Fe cation</name>
        <dbReference type="ChEBI" id="CHEBI:24875"/>
    </ligand>
</feature>
<feature type="binding site" evidence="1">
    <location>
        <position position="115"/>
    </location>
    <ligand>
        <name>Fe cation</name>
        <dbReference type="ChEBI" id="CHEBI:24875"/>
    </ligand>
</feature>
<feature type="binding site" evidence="1">
    <location>
        <begin position="134"/>
        <end position="138"/>
    </location>
    <ligand>
        <name>substrate</name>
    </ligand>
</feature>
<feature type="binding site" evidence="1">
    <location>
        <position position="167"/>
    </location>
    <ligand>
        <name>substrate</name>
    </ligand>
</feature>
<feature type="binding site" evidence="1">
    <location>
        <position position="180"/>
    </location>
    <ligand>
        <name>substrate</name>
    </ligand>
</feature>
<feature type="binding site" evidence="1">
    <location>
        <position position="272"/>
    </location>
    <ligand>
        <name>substrate</name>
    </ligand>
</feature>
<feature type="binding site" evidence="1">
    <location>
        <position position="300"/>
    </location>
    <ligand>
        <name>Fe cation</name>
        <dbReference type="ChEBI" id="CHEBI:24875"/>
    </ligand>
</feature>
<keyword id="KW-0012">Acyltransferase</keyword>
<keyword id="KW-0963">Cytoplasm</keyword>
<keyword id="KW-0408">Iron</keyword>
<keyword id="KW-0479">Metal-binding</keyword>
<keyword id="KW-0808">Transferase</keyword>
<keyword id="KW-0819">tRNA processing</keyword>
<evidence type="ECO:0000255" key="1">
    <source>
        <dbReference type="HAMAP-Rule" id="MF_01445"/>
    </source>
</evidence>
<name>TSAD_ECO81</name>